<gene>
    <name evidence="1" type="primary">cdd</name>
    <name type="ordered locus">SeHA_C2418</name>
</gene>
<sequence length="294" mass="31619">MHPRFQTAFAQLADNLQSALAPILADHHFPAMLTAEQVSTLKNTAGLDEDALAFALLPLAAACARTDLSHFNVGAIARGVSGNWYFGANMEFLGATMQQTVHAEQSAISHAWLRGEKGLAAVTVNYTPCGHCRQFMNELNSGLDLRIHLPGRAPHTLRDYLPDAFGPKDLEIKTLLMDEQDHGFTLTGDTLTQAAITAANKSHMPYSHSPSGVALECKDGRIFTGSYAENAAFNPTLPPLQGALNLLSLNGYDYADIQRAILAEKGDAALIQWDATAATLKALGCHNIDRVLLG</sequence>
<comment type="function">
    <text evidence="1">This enzyme scavenges exogenous and endogenous cytidine and 2'-deoxycytidine for UMP synthesis.</text>
</comment>
<comment type="catalytic activity">
    <reaction evidence="1">
        <text>cytidine + H2O + H(+) = uridine + NH4(+)</text>
        <dbReference type="Rhea" id="RHEA:16069"/>
        <dbReference type="ChEBI" id="CHEBI:15377"/>
        <dbReference type="ChEBI" id="CHEBI:15378"/>
        <dbReference type="ChEBI" id="CHEBI:16704"/>
        <dbReference type="ChEBI" id="CHEBI:17562"/>
        <dbReference type="ChEBI" id="CHEBI:28938"/>
        <dbReference type="EC" id="3.5.4.5"/>
    </reaction>
</comment>
<comment type="catalytic activity">
    <reaction evidence="1">
        <text>2'-deoxycytidine + H2O + H(+) = 2'-deoxyuridine + NH4(+)</text>
        <dbReference type="Rhea" id="RHEA:13433"/>
        <dbReference type="ChEBI" id="CHEBI:15377"/>
        <dbReference type="ChEBI" id="CHEBI:15378"/>
        <dbReference type="ChEBI" id="CHEBI:15698"/>
        <dbReference type="ChEBI" id="CHEBI:16450"/>
        <dbReference type="ChEBI" id="CHEBI:28938"/>
        <dbReference type="EC" id="3.5.4.5"/>
    </reaction>
</comment>
<comment type="cofactor">
    <cofactor evidence="1">
        <name>Zn(2+)</name>
        <dbReference type="ChEBI" id="CHEBI:29105"/>
    </cofactor>
    <text evidence="1">Binds 1 zinc ion.</text>
</comment>
<comment type="subunit">
    <text evidence="1">Homodimer.</text>
</comment>
<comment type="similarity">
    <text evidence="1">Belongs to the cytidine and deoxycytidylate deaminase family.</text>
</comment>
<keyword id="KW-0378">Hydrolase</keyword>
<keyword id="KW-0479">Metal-binding</keyword>
<keyword id="KW-0862">Zinc</keyword>
<protein>
    <recommendedName>
        <fullName evidence="1">Cytidine deaminase</fullName>
        <ecNumber evidence="1">3.5.4.5</ecNumber>
    </recommendedName>
    <alternativeName>
        <fullName evidence="1">Cytidine aminohydrolase</fullName>
        <shortName evidence="1">CDA</shortName>
    </alternativeName>
</protein>
<proteinExistence type="inferred from homology"/>
<reference key="1">
    <citation type="journal article" date="2011" name="J. Bacteriol.">
        <title>Comparative genomics of 28 Salmonella enterica isolates: evidence for CRISPR-mediated adaptive sublineage evolution.</title>
        <authorList>
            <person name="Fricke W.F."/>
            <person name="Mammel M.K."/>
            <person name="McDermott P.F."/>
            <person name="Tartera C."/>
            <person name="White D.G."/>
            <person name="Leclerc J.E."/>
            <person name="Ravel J."/>
            <person name="Cebula T.A."/>
        </authorList>
    </citation>
    <scope>NUCLEOTIDE SEQUENCE [LARGE SCALE GENOMIC DNA]</scope>
    <source>
        <strain>SL476</strain>
    </source>
</reference>
<accession>B4TAK5</accession>
<name>CDD_SALHS</name>
<organism>
    <name type="scientific">Salmonella heidelberg (strain SL476)</name>
    <dbReference type="NCBI Taxonomy" id="454169"/>
    <lineage>
        <taxon>Bacteria</taxon>
        <taxon>Pseudomonadati</taxon>
        <taxon>Pseudomonadota</taxon>
        <taxon>Gammaproteobacteria</taxon>
        <taxon>Enterobacterales</taxon>
        <taxon>Enterobacteriaceae</taxon>
        <taxon>Salmonella</taxon>
    </lineage>
</organism>
<dbReference type="EC" id="3.5.4.5" evidence="1"/>
<dbReference type="EMBL" id="CP001120">
    <property type="protein sequence ID" value="ACF69879.1"/>
    <property type="molecule type" value="Genomic_DNA"/>
</dbReference>
<dbReference type="RefSeq" id="WP_000553526.1">
    <property type="nucleotide sequence ID" value="NC_011083.1"/>
</dbReference>
<dbReference type="SMR" id="B4TAK5"/>
<dbReference type="KEGG" id="seh:SeHA_C2418"/>
<dbReference type="HOGENOM" id="CLU_052424_0_0_6"/>
<dbReference type="Proteomes" id="UP000001866">
    <property type="component" value="Chromosome"/>
</dbReference>
<dbReference type="GO" id="GO:0005829">
    <property type="term" value="C:cytosol"/>
    <property type="evidence" value="ECO:0007669"/>
    <property type="project" value="TreeGrafter"/>
</dbReference>
<dbReference type="GO" id="GO:0004126">
    <property type="term" value="F:cytidine deaminase activity"/>
    <property type="evidence" value="ECO:0007669"/>
    <property type="project" value="UniProtKB-UniRule"/>
</dbReference>
<dbReference type="GO" id="GO:0042802">
    <property type="term" value="F:identical protein binding"/>
    <property type="evidence" value="ECO:0007669"/>
    <property type="project" value="UniProtKB-ARBA"/>
</dbReference>
<dbReference type="GO" id="GO:0008270">
    <property type="term" value="F:zinc ion binding"/>
    <property type="evidence" value="ECO:0007669"/>
    <property type="project" value="UniProtKB-UniRule"/>
</dbReference>
<dbReference type="GO" id="GO:0009972">
    <property type="term" value="P:cytidine deamination"/>
    <property type="evidence" value="ECO:0007669"/>
    <property type="project" value="InterPro"/>
</dbReference>
<dbReference type="CDD" id="cd01283">
    <property type="entry name" value="cytidine_deaminase"/>
    <property type="match status" value="2"/>
</dbReference>
<dbReference type="FunFam" id="3.40.140.10:FF:000006">
    <property type="entry name" value="Cytidine deaminase"/>
    <property type="match status" value="1"/>
</dbReference>
<dbReference type="FunFam" id="3.40.140.10:FF:000007">
    <property type="entry name" value="Cytidine deaminase"/>
    <property type="match status" value="1"/>
</dbReference>
<dbReference type="Gene3D" id="3.40.140.10">
    <property type="entry name" value="Cytidine Deaminase, domain 2"/>
    <property type="match status" value="2"/>
</dbReference>
<dbReference type="HAMAP" id="MF_01558">
    <property type="entry name" value="Cyt_deam"/>
    <property type="match status" value="1"/>
</dbReference>
<dbReference type="InterPro" id="IPR016192">
    <property type="entry name" value="APOBEC/CMP_deaminase_Zn-bd"/>
</dbReference>
<dbReference type="InterPro" id="IPR002125">
    <property type="entry name" value="CMP_dCMP_dom"/>
</dbReference>
<dbReference type="InterPro" id="IPR013171">
    <property type="entry name" value="Cyd/dCyd_deaminase_Zn-bd"/>
</dbReference>
<dbReference type="InterPro" id="IPR050202">
    <property type="entry name" value="Cyt/Deoxycyt_deaminase"/>
</dbReference>
<dbReference type="InterPro" id="IPR006263">
    <property type="entry name" value="Cyt_deam_dimer"/>
</dbReference>
<dbReference type="InterPro" id="IPR016193">
    <property type="entry name" value="Cytidine_deaminase-like"/>
</dbReference>
<dbReference type="InterPro" id="IPR020797">
    <property type="entry name" value="Cytidine_deaminase_bacteria"/>
</dbReference>
<dbReference type="NCBIfam" id="TIGR01355">
    <property type="entry name" value="cyt_deam_dimer"/>
    <property type="match status" value="1"/>
</dbReference>
<dbReference type="NCBIfam" id="NF006537">
    <property type="entry name" value="PRK09027.1"/>
    <property type="match status" value="1"/>
</dbReference>
<dbReference type="PANTHER" id="PTHR11644">
    <property type="entry name" value="CYTIDINE DEAMINASE"/>
    <property type="match status" value="1"/>
</dbReference>
<dbReference type="PANTHER" id="PTHR11644:SF2">
    <property type="entry name" value="CYTIDINE DEAMINASE"/>
    <property type="match status" value="1"/>
</dbReference>
<dbReference type="Pfam" id="PF00383">
    <property type="entry name" value="dCMP_cyt_deam_1"/>
    <property type="match status" value="1"/>
</dbReference>
<dbReference type="Pfam" id="PF08211">
    <property type="entry name" value="dCMP_cyt_deam_2"/>
    <property type="match status" value="1"/>
</dbReference>
<dbReference type="PIRSF" id="PIRSF006334">
    <property type="entry name" value="Cdd_plus_pseudo"/>
    <property type="match status" value="1"/>
</dbReference>
<dbReference type="SUPFAM" id="SSF53927">
    <property type="entry name" value="Cytidine deaminase-like"/>
    <property type="match status" value="2"/>
</dbReference>
<dbReference type="PROSITE" id="PS00903">
    <property type="entry name" value="CYT_DCMP_DEAMINASES_1"/>
    <property type="match status" value="1"/>
</dbReference>
<dbReference type="PROSITE" id="PS51747">
    <property type="entry name" value="CYT_DCMP_DEAMINASES_2"/>
    <property type="match status" value="2"/>
</dbReference>
<evidence type="ECO:0000255" key="1">
    <source>
        <dbReference type="HAMAP-Rule" id="MF_01558"/>
    </source>
</evidence>
<evidence type="ECO:0000255" key="2">
    <source>
        <dbReference type="PROSITE-ProRule" id="PRU01083"/>
    </source>
</evidence>
<feature type="chain" id="PRO_1000147111" description="Cytidine deaminase">
    <location>
        <begin position="1"/>
        <end position="294"/>
    </location>
</feature>
<feature type="domain" description="CMP/dCMP-type deaminase 1" evidence="2">
    <location>
        <begin position="48"/>
        <end position="168"/>
    </location>
</feature>
<feature type="domain" description="CMP/dCMP-type deaminase 2" evidence="2">
    <location>
        <begin position="186"/>
        <end position="294"/>
    </location>
</feature>
<feature type="active site" description="Proton donor" evidence="1">
    <location>
        <position position="104"/>
    </location>
</feature>
<feature type="binding site" evidence="1">
    <location>
        <begin position="89"/>
        <end position="91"/>
    </location>
    <ligand>
        <name>substrate</name>
    </ligand>
</feature>
<feature type="binding site" evidence="1">
    <location>
        <position position="102"/>
    </location>
    <ligand>
        <name>Zn(2+)</name>
        <dbReference type="ChEBI" id="CHEBI:29105"/>
        <note>catalytic</note>
    </ligand>
</feature>
<feature type="binding site" evidence="1">
    <location>
        <position position="129"/>
    </location>
    <ligand>
        <name>Zn(2+)</name>
        <dbReference type="ChEBI" id="CHEBI:29105"/>
        <note>catalytic</note>
    </ligand>
</feature>
<feature type="binding site" evidence="1">
    <location>
        <position position="132"/>
    </location>
    <ligand>
        <name>Zn(2+)</name>
        <dbReference type="ChEBI" id="CHEBI:29105"/>
        <note>catalytic</note>
    </ligand>
</feature>